<keyword id="KW-1185">Reference proteome</keyword>
<evidence type="ECO:0000255" key="1">
    <source>
        <dbReference type="HAMAP-Rule" id="MF_00715"/>
    </source>
</evidence>
<reference key="1">
    <citation type="journal article" date="2002" name="Nat. Biotechnol.">
        <title>Genome sequence of the dissimilatory metal ion-reducing bacterium Shewanella oneidensis.</title>
        <authorList>
            <person name="Heidelberg J.F."/>
            <person name="Paulsen I.T."/>
            <person name="Nelson K.E."/>
            <person name="Gaidos E.J."/>
            <person name="Nelson W.C."/>
            <person name="Read T.D."/>
            <person name="Eisen J.A."/>
            <person name="Seshadri R."/>
            <person name="Ward N.L."/>
            <person name="Methe B.A."/>
            <person name="Clayton R.A."/>
            <person name="Meyer T."/>
            <person name="Tsapin A."/>
            <person name="Scott J."/>
            <person name="Beanan M.J."/>
            <person name="Brinkac L.M."/>
            <person name="Daugherty S.C."/>
            <person name="DeBoy R.T."/>
            <person name="Dodson R.J."/>
            <person name="Durkin A.S."/>
            <person name="Haft D.H."/>
            <person name="Kolonay J.F."/>
            <person name="Madupu R."/>
            <person name="Peterson J.D."/>
            <person name="Umayam L.A."/>
            <person name="White O."/>
            <person name="Wolf A.M."/>
            <person name="Vamathevan J.J."/>
            <person name="Weidman J.F."/>
            <person name="Impraim M."/>
            <person name="Lee K."/>
            <person name="Berry K.J."/>
            <person name="Lee C."/>
            <person name="Mueller J."/>
            <person name="Khouri H.M."/>
            <person name="Gill J."/>
            <person name="Utterback T.R."/>
            <person name="McDonald L.A."/>
            <person name="Feldblyum T.V."/>
            <person name="Smith H.O."/>
            <person name="Venter J.C."/>
            <person name="Nealson K.H."/>
            <person name="Fraser C.M."/>
        </authorList>
    </citation>
    <scope>NUCLEOTIDE SEQUENCE [LARGE SCALE GENOMIC DNA]</scope>
    <source>
        <strain>ATCC 700550 / JCM 31522 / CIP 106686 / LMG 19005 / NCIMB 14063 / MR-1</strain>
    </source>
</reference>
<comment type="similarity">
    <text evidence="1">Belongs to the SlyX family.</text>
</comment>
<organism>
    <name type="scientific">Shewanella oneidensis (strain ATCC 700550 / JCM 31522 / CIP 106686 / LMG 19005 / NCIMB 14063 / MR-1)</name>
    <dbReference type="NCBI Taxonomy" id="211586"/>
    <lineage>
        <taxon>Bacteria</taxon>
        <taxon>Pseudomonadati</taxon>
        <taxon>Pseudomonadota</taxon>
        <taxon>Gammaproteobacteria</taxon>
        <taxon>Alteromonadales</taxon>
        <taxon>Shewanellaceae</taxon>
        <taxon>Shewanella</taxon>
    </lineage>
</organism>
<dbReference type="EMBL" id="AE014299">
    <property type="protein sequence ID" value="AAN54135.1"/>
    <property type="molecule type" value="Genomic_DNA"/>
</dbReference>
<dbReference type="RefSeq" id="NP_716690.1">
    <property type="nucleotide sequence ID" value="NC_004347.2"/>
</dbReference>
<dbReference type="RefSeq" id="WP_011071317.1">
    <property type="nucleotide sequence ID" value="NZ_CP053946.1"/>
</dbReference>
<dbReference type="SMR" id="Q8EHZ1"/>
<dbReference type="STRING" id="211586.SO_1063"/>
<dbReference type="PaxDb" id="211586-SO_1063"/>
<dbReference type="KEGG" id="son:SO_1063"/>
<dbReference type="PATRIC" id="fig|211586.12.peg.1020"/>
<dbReference type="eggNOG" id="COG2900">
    <property type="taxonomic scope" value="Bacteria"/>
</dbReference>
<dbReference type="HOGENOM" id="CLU_180796_4_0_6"/>
<dbReference type="OrthoDB" id="5771733at2"/>
<dbReference type="PhylomeDB" id="Q8EHZ1"/>
<dbReference type="BioCyc" id="SONE211586:G1GMP-982-MONOMER"/>
<dbReference type="Proteomes" id="UP000008186">
    <property type="component" value="Chromosome"/>
</dbReference>
<dbReference type="HAMAP" id="MF_00715">
    <property type="entry name" value="SlyX"/>
    <property type="match status" value="1"/>
</dbReference>
<dbReference type="InterPro" id="IPR007236">
    <property type="entry name" value="SlyX"/>
</dbReference>
<dbReference type="PANTHER" id="PTHR36508">
    <property type="entry name" value="PROTEIN SLYX"/>
    <property type="match status" value="1"/>
</dbReference>
<dbReference type="PANTHER" id="PTHR36508:SF1">
    <property type="entry name" value="PROTEIN SLYX"/>
    <property type="match status" value="1"/>
</dbReference>
<dbReference type="Pfam" id="PF04102">
    <property type="entry name" value="SlyX"/>
    <property type="match status" value="1"/>
</dbReference>
<name>SLYX_SHEON</name>
<gene>
    <name evidence="1" type="primary">slyX</name>
    <name type="ordered locus">SO_1063</name>
</gene>
<proteinExistence type="inferred from homology"/>
<protein>
    <recommendedName>
        <fullName evidence="1">Protein SlyX homolog</fullName>
    </recommendedName>
</protein>
<feature type="chain" id="PRO_0000209214" description="Protein SlyX homolog">
    <location>
        <begin position="1"/>
        <end position="70"/>
    </location>
</feature>
<sequence>MQGVQEQIEELQTKLAFQELTVEELNQEVIKLNQLVAHQQHQIQLLIGKLQAIEPSNMATQAEETPPPHY</sequence>
<accession>Q8EHZ1</accession>